<organism>
    <name type="scientific">Xenopus laevis</name>
    <name type="common">African clawed frog</name>
    <dbReference type="NCBI Taxonomy" id="8355"/>
    <lineage>
        <taxon>Eukaryota</taxon>
        <taxon>Metazoa</taxon>
        <taxon>Chordata</taxon>
        <taxon>Craniata</taxon>
        <taxon>Vertebrata</taxon>
        <taxon>Euteleostomi</taxon>
        <taxon>Amphibia</taxon>
        <taxon>Batrachia</taxon>
        <taxon>Anura</taxon>
        <taxon>Pipoidea</taxon>
        <taxon>Pipidae</taxon>
        <taxon>Xenopodinae</taxon>
        <taxon>Xenopus</taxon>
        <taxon>Xenopus</taxon>
    </lineage>
</organism>
<protein>
    <recommendedName>
        <fullName>Inhibitor of nuclear factor kappa-B kinase subunit alpha</fullName>
        <shortName>I kappa-B kinase alpha</shortName>
        <shortName>IKK-A</shortName>
        <shortName>IKK-alpha</shortName>
        <shortName>IkBKA</shortName>
        <ecNumber evidence="2">2.7.11.10</ecNumber>
    </recommendedName>
    <alternativeName>
        <fullName>Conserved helix-loop-helix ubiquitous kinase</fullName>
    </alternativeName>
    <alternativeName>
        <fullName>Nuclear factor NF-kappa-B inhibitor kinase alpha</fullName>
        <shortName>NFKBIKA</shortName>
    </alternativeName>
</protein>
<name>IKKA_XENLA</name>
<sequence length="743" mass="85152">MERPPVQHGAVCGPWDMKDRLGTGGFGNVCLYQNRETGELKAIKSCRLELSVKNKERWCQEIQIMKRLNHPNVVKACDVPPEMDFLVNDVPHLAMEYCAGGDLRKLLNKPENCCGLKESQVLNLISDIGSGIQYLHENRIIHRDLKPENIVLQECNGKTVHKIIDLGYAKDLDQGSLCTSFVGTLQYLAPELFENKPYSVTVDYWSFGTMAFECIAGFRPFLHNMQPFTWHEKIKKKDHKHIYAYEEMSGEIRFSTSLPEPNNLCSIIVDKIETWLQLLLNWDPVQRGGGIDCGRPRCFMLMDQIFSLKIVHILNMTSAKIHSFHLQPEESLHTLQSRIERETGISTCNQELLLEMGVSLDPRKPASQCVIDGVKGWDSYMVYLFDKSKTVYEGPFQSRSLSECLNYIVQDSKVQLPIPQLRKVWAEAVHYVSGLKEDYSRLFQGQRAAMLSLLRFNTNLTKMKNTMVSASQQLDAKLQFFKRSIEIDLERYSDQMAYGISSEKMLRAWKEMEDKAVCFGKAGEIHFLDETIMGLHTEIVELQRSPCARRQGDVMEHLEQRAMELYKQLKPRSPDKAYSDSTEMVKILVQTVQGQDRVLKELFGHLSKLLGCKQKIIDLLPQIEMTVNNIKEADSSLMQMQAKRQREIWHLLKIACTQSSTRSLVTASGETPITSRTSAWSDQSSPQALFSMLTSKDKGREILRHTIDKNTDYQKLLSNLILQTQTTMEQTSLMSMDFSWLNQ</sequence>
<reference key="1">
    <citation type="submission" date="2004-06" db="EMBL/GenBank/DDBJ databases">
        <authorList>
            <consortium name="NIH - Xenopus Gene Collection (XGC) project"/>
        </authorList>
    </citation>
    <scope>NUCLEOTIDE SEQUENCE [LARGE SCALE MRNA]</scope>
    <source>
        <tissue>Kidney</tissue>
    </source>
</reference>
<evidence type="ECO:0000250" key="1"/>
<evidence type="ECO:0000250" key="2">
    <source>
        <dbReference type="UniProtKB" id="O15111"/>
    </source>
</evidence>
<evidence type="ECO:0000255" key="3">
    <source>
        <dbReference type="PROSITE-ProRule" id="PRU00159"/>
    </source>
</evidence>
<evidence type="ECO:0000255" key="4">
    <source>
        <dbReference type="PROSITE-ProRule" id="PRU10027"/>
    </source>
</evidence>
<dbReference type="EC" id="2.7.11.10" evidence="2"/>
<dbReference type="EMBL" id="BC074232">
    <property type="protein sequence ID" value="AAH74232.1"/>
    <property type="molecule type" value="mRNA"/>
</dbReference>
<dbReference type="RefSeq" id="NP_001086127.1">
    <property type="nucleotide sequence ID" value="NM_001092658.1"/>
</dbReference>
<dbReference type="SMR" id="Q6GM53"/>
<dbReference type="GeneID" id="444556"/>
<dbReference type="KEGG" id="xla:444556"/>
<dbReference type="AGR" id="Xenbase:XB-GENE-5910051"/>
<dbReference type="CTD" id="444556"/>
<dbReference type="Xenbase" id="XB-GENE-5910051">
    <property type="gene designation" value="chuk.S"/>
</dbReference>
<dbReference type="OrthoDB" id="267381at2759"/>
<dbReference type="Proteomes" id="UP000186698">
    <property type="component" value="Chromosome 7S"/>
</dbReference>
<dbReference type="Bgee" id="444556">
    <property type="expression patterns" value="Expressed in egg cell and 19 other cell types or tissues"/>
</dbReference>
<dbReference type="GO" id="GO:0005737">
    <property type="term" value="C:cytoplasm"/>
    <property type="evidence" value="ECO:0000318"/>
    <property type="project" value="GO_Central"/>
</dbReference>
<dbReference type="GO" id="GO:0008385">
    <property type="term" value="C:IkappaB kinase complex"/>
    <property type="evidence" value="ECO:0000318"/>
    <property type="project" value="GO_Central"/>
</dbReference>
<dbReference type="GO" id="GO:0005634">
    <property type="term" value="C:nucleus"/>
    <property type="evidence" value="ECO:0007669"/>
    <property type="project" value="UniProtKB-SubCell"/>
</dbReference>
<dbReference type="GO" id="GO:0005524">
    <property type="term" value="F:ATP binding"/>
    <property type="evidence" value="ECO:0007669"/>
    <property type="project" value="UniProtKB-KW"/>
</dbReference>
<dbReference type="GO" id="GO:0008384">
    <property type="term" value="F:IkappaB kinase activity"/>
    <property type="evidence" value="ECO:0007669"/>
    <property type="project" value="UniProtKB-EC"/>
</dbReference>
<dbReference type="GO" id="GO:0046982">
    <property type="term" value="F:protein heterodimerization activity"/>
    <property type="evidence" value="ECO:0000250"/>
    <property type="project" value="UniProtKB"/>
</dbReference>
<dbReference type="GO" id="GO:0042803">
    <property type="term" value="F:protein homodimerization activity"/>
    <property type="evidence" value="ECO:0000250"/>
    <property type="project" value="UniProtKB"/>
</dbReference>
<dbReference type="GO" id="GO:0004674">
    <property type="term" value="F:protein serine/threonine kinase activity"/>
    <property type="evidence" value="ECO:0000318"/>
    <property type="project" value="GO_Central"/>
</dbReference>
<dbReference type="GO" id="GO:0071356">
    <property type="term" value="P:cellular response to tumor necrosis factor"/>
    <property type="evidence" value="ECO:0000250"/>
    <property type="project" value="UniProtKB"/>
</dbReference>
<dbReference type="GO" id="GO:0043123">
    <property type="term" value="P:positive regulation of canonical NF-kappaB signal transduction"/>
    <property type="evidence" value="ECO:0000318"/>
    <property type="project" value="GO_Central"/>
</dbReference>
<dbReference type="GO" id="GO:0045944">
    <property type="term" value="P:positive regulation of transcription by RNA polymerase II"/>
    <property type="evidence" value="ECO:0000250"/>
    <property type="project" value="UniProtKB"/>
</dbReference>
<dbReference type="GO" id="GO:0033209">
    <property type="term" value="P:tumor necrosis factor-mediated signaling pathway"/>
    <property type="evidence" value="ECO:0000318"/>
    <property type="project" value="GO_Central"/>
</dbReference>
<dbReference type="CDD" id="cd14039">
    <property type="entry name" value="STKc_IKK_alpha"/>
    <property type="match status" value="1"/>
</dbReference>
<dbReference type="CDD" id="cd17046">
    <property type="entry name" value="Ubl_IKKA_like"/>
    <property type="match status" value="1"/>
</dbReference>
<dbReference type="FunFam" id="1.20.1270.250:FF:000001">
    <property type="entry name" value="Inhibitor of nuclear factor kappa-B kinase subunit alpha"/>
    <property type="match status" value="1"/>
</dbReference>
<dbReference type="FunFam" id="3.10.20.90:FF:000061">
    <property type="entry name" value="Inhibitor of nuclear factor kappa-B kinase subunit alpha"/>
    <property type="match status" value="1"/>
</dbReference>
<dbReference type="FunFam" id="1.10.510.10:FF:000147">
    <property type="entry name" value="Inhibitor of nuclear factor kappa-B kinase subunit beta"/>
    <property type="match status" value="1"/>
</dbReference>
<dbReference type="Gene3D" id="1.20.1270.250">
    <property type="match status" value="1"/>
</dbReference>
<dbReference type="Gene3D" id="3.10.20.90">
    <property type="entry name" value="Phosphatidylinositol 3-kinase Catalytic Subunit, Chain A, domain 1"/>
    <property type="match status" value="1"/>
</dbReference>
<dbReference type="Gene3D" id="1.10.510.10">
    <property type="entry name" value="Transferase(Phosphotransferase) domain 1"/>
    <property type="match status" value="1"/>
</dbReference>
<dbReference type="InterPro" id="IPR041185">
    <property type="entry name" value="IKBKB_SDD"/>
</dbReference>
<dbReference type="InterPro" id="IPR046375">
    <property type="entry name" value="IKBKB_SDD_sf"/>
</dbReference>
<dbReference type="InterPro" id="IPR051180">
    <property type="entry name" value="IKK"/>
</dbReference>
<dbReference type="InterPro" id="IPR011009">
    <property type="entry name" value="Kinase-like_dom_sf"/>
</dbReference>
<dbReference type="InterPro" id="IPR000719">
    <property type="entry name" value="Prot_kinase_dom"/>
</dbReference>
<dbReference type="InterPro" id="IPR008271">
    <property type="entry name" value="Ser/Thr_kinase_AS"/>
</dbReference>
<dbReference type="PANTHER" id="PTHR22969">
    <property type="entry name" value="IKB KINASE"/>
    <property type="match status" value="1"/>
</dbReference>
<dbReference type="PANTHER" id="PTHR22969:SF13">
    <property type="entry name" value="INHIBITOR OF NUCLEAR FACTOR KAPPA-B KINASE SUBUNIT ALPHA"/>
    <property type="match status" value="1"/>
</dbReference>
<dbReference type="Pfam" id="PF18397">
    <property type="entry name" value="IKBKB_SDD"/>
    <property type="match status" value="1"/>
</dbReference>
<dbReference type="Pfam" id="PF00069">
    <property type="entry name" value="Pkinase"/>
    <property type="match status" value="1"/>
</dbReference>
<dbReference type="SMART" id="SM00220">
    <property type="entry name" value="S_TKc"/>
    <property type="match status" value="1"/>
</dbReference>
<dbReference type="SUPFAM" id="SSF56112">
    <property type="entry name" value="Protein kinase-like (PK-like)"/>
    <property type="match status" value="1"/>
</dbReference>
<dbReference type="PROSITE" id="PS50011">
    <property type="entry name" value="PROTEIN_KINASE_DOM"/>
    <property type="match status" value="1"/>
</dbReference>
<dbReference type="PROSITE" id="PS00108">
    <property type="entry name" value="PROTEIN_KINASE_ST"/>
    <property type="match status" value="1"/>
</dbReference>
<proteinExistence type="evidence at transcript level"/>
<comment type="function">
    <text evidence="2">Phosphorylates inhibitors of NF-kappa-B thus leading to the dissociation of the inhibitor/NF-kappa-B complex and ultimately the degradation of the inhibitor. Phosphorylates 'Ser-10' of histone H3 at NF-kappa-B-regulated promoters during inflammatory responses triggered by cytokines.</text>
</comment>
<comment type="catalytic activity">
    <reaction evidence="2">
        <text>L-seryl-[I-kappa-B protein] + ATP = O-phospho-L-seryl-[I-kappa-B protein] + ADP + H(+)</text>
        <dbReference type="Rhea" id="RHEA:19073"/>
        <dbReference type="Rhea" id="RHEA-COMP:13698"/>
        <dbReference type="Rhea" id="RHEA-COMP:13699"/>
        <dbReference type="ChEBI" id="CHEBI:15378"/>
        <dbReference type="ChEBI" id="CHEBI:29999"/>
        <dbReference type="ChEBI" id="CHEBI:30616"/>
        <dbReference type="ChEBI" id="CHEBI:83421"/>
        <dbReference type="ChEBI" id="CHEBI:456216"/>
        <dbReference type="EC" id="2.7.11.10"/>
    </reaction>
</comment>
<comment type="activity regulation">
    <text evidence="1">Activated when phosphorylated and inactivated when dephosphorylated.</text>
</comment>
<comment type="subcellular location">
    <subcellularLocation>
        <location evidence="1">Cytoplasm</location>
    </subcellularLocation>
    <subcellularLocation>
        <location evidence="1">Nucleus</location>
    </subcellularLocation>
    <text evidence="1">Shuttles between the cytoplasm and the nucleus.</text>
</comment>
<comment type="similarity">
    <text evidence="3">Belongs to the protein kinase superfamily. Ser/Thr protein kinase family. I-kappa-B kinase subfamily.</text>
</comment>
<keyword id="KW-0067">ATP-binding</keyword>
<keyword id="KW-0963">Cytoplasm</keyword>
<keyword id="KW-0418">Kinase</keyword>
<keyword id="KW-0547">Nucleotide-binding</keyword>
<keyword id="KW-0539">Nucleus</keyword>
<keyword id="KW-0597">Phosphoprotein</keyword>
<keyword id="KW-1185">Reference proteome</keyword>
<keyword id="KW-0723">Serine/threonine-protein kinase</keyword>
<keyword id="KW-0808">Transferase</keyword>
<feature type="chain" id="PRO_0000268828" description="Inhibitor of nuclear factor kappa-B kinase subunit alpha">
    <location>
        <begin position="1"/>
        <end position="743"/>
    </location>
</feature>
<feature type="domain" description="Protein kinase" evidence="3">
    <location>
        <begin position="15"/>
        <end position="300"/>
    </location>
</feature>
<feature type="region of interest" description="Leucine-zipper">
    <location>
        <begin position="453"/>
        <end position="474"/>
    </location>
</feature>
<feature type="region of interest" description="NEMO-binding" evidence="1">
    <location>
        <begin position="736"/>
        <end position="741"/>
    </location>
</feature>
<feature type="active site" description="Proton acceptor" evidence="3 4">
    <location>
        <position position="144"/>
    </location>
</feature>
<feature type="binding site" evidence="3">
    <location>
        <begin position="21"/>
        <end position="29"/>
    </location>
    <ligand>
        <name>ATP</name>
        <dbReference type="ChEBI" id="CHEBI:30616"/>
    </ligand>
</feature>
<feature type="binding site" evidence="3">
    <location>
        <position position="44"/>
    </location>
    <ligand>
        <name>ATP</name>
        <dbReference type="ChEBI" id="CHEBI:30616"/>
    </ligand>
</feature>
<accession>Q6GM53</accession>
<gene>
    <name type="primary">chuk</name>
    <name type="synonym">ikka</name>
</gene>